<protein>
    <recommendedName>
        <fullName>UPF0337 protein PP_4561</fullName>
    </recommendedName>
</protein>
<name>Y4561_PSEPK</name>
<proteinExistence type="inferred from homology"/>
<evidence type="ECO:0000256" key="1">
    <source>
        <dbReference type="SAM" id="MobiDB-lite"/>
    </source>
</evidence>
<evidence type="ECO:0000305" key="2"/>
<sequence length="59" mass="6191">MSGTKDKAKGLANEAIGNVKQGVGKVTDNEKLRAEGKAQELKGEAQQVKGNVKDAVKKP</sequence>
<feature type="chain" id="PRO_0000210018" description="UPF0337 protein PP_4561">
    <location>
        <begin position="1"/>
        <end position="59"/>
    </location>
</feature>
<feature type="region of interest" description="Disordered" evidence="1">
    <location>
        <begin position="27"/>
        <end position="59"/>
    </location>
</feature>
<feature type="compositionally biased region" description="Basic and acidic residues" evidence="1">
    <location>
        <begin position="27"/>
        <end position="43"/>
    </location>
</feature>
<comment type="similarity">
    <text evidence="2">Belongs to the UPF0337 (CsbD) family.</text>
</comment>
<organism>
    <name type="scientific">Pseudomonas putida (strain ATCC 47054 / DSM 6125 / CFBP 8728 / NCIMB 11950 / KT2440)</name>
    <dbReference type="NCBI Taxonomy" id="160488"/>
    <lineage>
        <taxon>Bacteria</taxon>
        <taxon>Pseudomonadati</taxon>
        <taxon>Pseudomonadota</taxon>
        <taxon>Gammaproteobacteria</taxon>
        <taxon>Pseudomonadales</taxon>
        <taxon>Pseudomonadaceae</taxon>
        <taxon>Pseudomonas</taxon>
    </lineage>
</organism>
<gene>
    <name type="ordered locus">PP_4561</name>
</gene>
<dbReference type="EMBL" id="AE015451">
    <property type="protein sequence ID" value="AAN70134.1"/>
    <property type="molecule type" value="Genomic_DNA"/>
</dbReference>
<dbReference type="RefSeq" id="NP_746670.1">
    <property type="nucleotide sequence ID" value="NC_002947.4"/>
</dbReference>
<dbReference type="RefSeq" id="WP_010955233.1">
    <property type="nucleotide sequence ID" value="NZ_CP169744.1"/>
</dbReference>
<dbReference type="SMR" id="Q88EA5"/>
<dbReference type="STRING" id="160488.PP_4561"/>
<dbReference type="PaxDb" id="160488-PP_4561"/>
<dbReference type="KEGG" id="ppu:PP_4561"/>
<dbReference type="PATRIC" id="fig|160488.4.peg.4864"/>
<dbReference type="eggNOG" id="COG3237">
    <property type="taxonomic scope" value="Bacteria"/>
</dbReference>
<dbReference type="HOGENOM" id="CLU_135567_3_2_6"/>
<dbReference type="OrthoDB" id="7226109at2"/>
<dbReference type="PhylomeDB" id="Q88EA5"/>
<dbReference type="BioCyc" id="PPUT160488:G1G01-4869-MONOMER"/>
<dbReference type="Proteomes" id="UP000000556">
    <property type="component" value="Chromosome"/>
</dbReference>
<dbReference type="Gene3D" id="1.10.1470.10">
    <property type="entry name" value="YjbJ"/>
    <property type="match status" value="1"/>
</dbReference>
<dbReference type="InterPro" id="IPR008462">
    <property type="entry name" value="CsbD"/>
</dbReference>
<dbReference type="InterPro" id="IPR036629">
    <property type="entry name" value="YjbJ_sf"/>
</dbReference>
<dbReference type="Pfam" id="PF05532">
    <property type="entry name" value="CsbD"/>
    <property type="match status" value="1"/>
</dbReference>
<dbReference type="SUPFAM" id="SSF69047">
    <property type="entry name" value="Hypothetical protein YjbJ"/>
    <property type="match status" value="1"/>
</dbReference>
<reference key="1">
    <citation type="journal article" date="2002" name="Environ. Microbiol.">
        <title>Complete genome sequence and comparative analysis of the metabolically versatile Pseudomonas putida KT2440.</title>
        <authorList>
            <person name="Nelson K.E."/>
            <person name="Weinel C."/>
            <person name="Paulsen I.T."/>
            <person name="Dodson R.J."/>
            <person name="Hilbert H."/>
            <person name="Martins dos Santos V.A.P."/>
            <person name="Fouts D.E."/>
            <person name="Gill S.R."/>
            <person name="Pop M."/>
            <person name="Holmes M."/>
            <person name="Brinkac L.M."/>
            <person name="Beanan M.J."/>
            <person name="DeBoy R.T."/>
            <person name="Daugherty S.C."/>
            <person name="Kolonay J.F."/>
            <person name="Madupu R."/>
            <person name="Nelson W.C."/>
            <person name="White O."/>
            <person name="Peterson J.D."/>
            <person name="Khouri H.M."/>
            <person name="Hance I."/>
            <person name="Chris Lee P."/>
            <person name="Holtzapple E.K."/>
            <person name="Scanlan D."/>
            <person name="Tran K."/>
            <person name="Moazzez A."/>
            <person name="Utterback T.R."/>
            <person name="Rizzo M."/>
            <person name="Lee K."/>
            <person name="Kosack D."/>
            <person name="Moestl D."/>
            <person name="Wedler H."/>
            <person name="Lauber J."/>
            <person name="Stjepandic D."/>
            <person name="Hoheisel J."/>
            <person name="Straetz M."/>
            <person name="Heim S."/>
            <person name="Kiewitz C."/>
            <person name="Eisen J.A."/>
            <person name="Timmis K.N."/>
            <person name="Duesterhoeft A."/>
            <person name="Tuemmler B."/>
            <person name="Fraser C.M."/>
        </authorList>
    </citation>
    <scope>NUCLEOTIDE SEQUENCE [LARGE SCALE GENOMIC DNA]</scope>
    <source>
        <strain>ATCC 47054 / DSM 6125 / CFBP 8728 / NCIMB 11950 / KT2440</strain>
    </source>
</reference>
<accession>Q88EA5</accession>
<keyword id="KW-1185">Reference proteome</keyword>